<dbReference type="EMBL" id="X15155">
    <property type="protein sequence ID" value="CAA33249.1"/>
    <property type="molecule type" value="mRNA"/>
</dbReference>
<dbReference type="EMBL" id="U18530">
    <property type="protein sequence ID" value="AAB64504.1"/>
    <property type="molecule type" value="Genomic_DNA"/>
</dbReference>
<dbReference type="EMBL" id="AY558342">
    <property type="protein sequence ID" value="AAS56668.1"/>
    <property type="molecule type" value="Genomic_DNA"/>
</dbReference>
<dbReference type="EMBL" id="BK006939">
    <property type="protein sequence ID" value="DAA07625.1"/>
    <property type="molecule type" value="Genomic_DNA"/>
</dbReference>
<dbReference type="PIR" id="S22257">
    <property type="entry name" value="PXBYL6"/>
</dbReference>
<dbReference type="RefSeq" id="NP_010887.3">
    <property type="nucleotide sequence ID" value="NM_001178842.3"/>
</dbReference>
<dbReference type="PDB" id="3J9T">
    <property type="method" value="EM"/>
    <property type="resolution" value="6.90 A"/>
    <property type="chains" value="R/S/T/U/V/W/X/Y/Z/a=1-160"/>
</dbReference>
<dbReference type="PDB" id="3J9U">
    <property type="method" value="EM"/>
    <property type="resolution" value="7.60 A"/>
    <property type="chains" value="R/S/T/U/V/W/X/Y/Z/a=1-160"/>
</dbReference>
<dbReference type="PDB" id="3J9V">
    <property type="method" value="EM"/>
    <property type="resolution" value="8.30 A"/>
    <property type="chains" value="R/S/T/U/V/W/X/Y/Z/a=1-160"/>
</dbReference>
<dbReference type="PDB" id="5TJ5">
    <property type="method" value="EM"/>
    <property type="resolution" value="3.90 A"/>
    <property type="chains" value="E/F/G/H/I/J/M/N=9-158"/>
</dbReference>
<dbReference type="PDB" id="5VOX">
    <property type="method" value="EM"/>
    <property type="resolution" value="6.80 A"/>
    <property type="chains" value="T/U/V/W/X/Y/Z/a=1-160"/>
</dbReference>
<dbReference type="PDB" id="5VOY">
    <property type="method" value="EM"/>
    <property type="resolution" value="7.90 A"/>
    <property type="chains" value="T/U/V/W/X/Y/Z/a=1-160"/>
</dbReference>
<dbReference type="PDB" id="5VOZ">
    <property type="method" value="EM"/>
    <property type="resolution" value="7.60 A"/>
    <property type="chains" value="T/U/V/W/X/Y/Z/a=1-160"/>
</dbReference>
<dbReference type="PDB" id="6C6L">
    <property type="method" value="EM"/>
    <property type="resolution" value="3.50 A"/>
    <property type="chains" value="E/F/G/H/I/J/K/L=1-160"/>
</dbReference>
<dbReference type="PDB" id="6M0R">
    <property type="method" value="EM"/>
    <property type="resolution" value="2.70 A"/>
    <property type="chains" value="E/F/G/H/I/J/K/L=1-159"/>
</dbReference>
<dbReference type="PDB" id="6M0S">
    <property type="method" value="EM"/>
    <property type="resolution" value="3.60 A"/>
    <property type="chains" value="E/F/G/H/I/J/K/L=1-159"/>
</dbReference>
<dbReference type="PDB" id="6O7T">
    <property type="method" value="EM"/>
    <property type="resolution" value="3.20 A"/>
    <property type="chains" value="g/h/i/j/k/l/m/n=1-160"/>
</dbReference>
<dbReference type="PDB" id="6O7U">
    <property type="method" value="EM"/>
    <property type="resolution" value="3.10 A"/>
    <property type="chains" value="g/h/i/j/k/l/m/n=1-160"/>
</dbReference>
<dbReference type="PDB" id="6O7V">
    <property type="method" value="EM"/>
    <property type="resolution" value="6.60 A"/>
    <property type="chains" value="g/h/i/j/k/l/m/n=1-160"/>
</dbReference>
<dbReference type="PDB" id="6O7W">
    <property type="method" value="EM"/>
    <property type="resolution" value="7.00 A"/>
    <property type="chains" value="g/h/i/j/k/l/m/n=1-160"/>
</dbReference>
<dbReference type="PDB" id="6O7X">
    <property type="method" value="EM"/>
    <property type="resolution" value="8.70 A"/>
    <property type="chains" value="g/h/i/j/k/l/m/n=1-160"/>
</dbReference>
<dbReference type="PDB" id="6PE4">
    <property type="method" value="EM"/>
    <property type="resolution" value="3.10 A"/>
    <property type="chains" value="I/J/K/L/M/N/O/P=1-160"/>
</dbReference>
<dbReference type="PDB" id="6PE5">
    <property type="method" value="EM"/>
    <property type="resolution" value="3.20 A"/>
    <property type="chains" value="I/J/K/L/M/N/O/P=1-160"/>
</dbReference>
<dbReference type="PDB" id="7FDA">
    <property type="method" value="EM"/>
    <property type="resolution" value="4.20 A"/>
    <property type="chains" value="V/W/X/Y/Z/a/b/c=1-160"/>
</dbReference>
<dbReference type="PDB" id="7FDB">
    <property type="method" value="EM"/>
    <property type="resolution" value="4.80 A"/>
    <property type="chains" value="V/W/X/Y/Z/a/b/c=1-160"/>
</dbReference>
<dbReference type="PDB" id="7FDC">
    <property type="method" value="EM"/>
    <property type="resolution" value="6.60 A"/>
    <property type="chains" value="V/W/X/Y/Z/a/b/c=1-160"/>
</dbReference>
<dbReference type="PDB" id="7TAO">
    <property type="method" value="EM"/>
    <property type="resolution" value="3.20 A"/>
    <property type="chains" value="E/F/G/H/I/J/K/L=1-160"/>
</dbReference>
<dbReference type="PDB" id="7TAP">
    <property type="method" value="EM"/>
    <property type="resolution" value="2.80 A"/>
    <property type="chains" value="E/F/G/H/I/J/K/L=1-160"/>
</dbReference>
<dbReference type="PDB" id="7TMR">
    <property type="method" value="EM"/>
    <property type="resolution" value="3.50 A"/>
    <property type="chains" value="g/h/i/j/k/l/m/n=1-160"/>
</dbReference>
<dbReference type="PDB" id="7TMS">
    <property type="method" value="EM"/>
    <property type="resolution" value="3.80 A"/>
    <property type="chains" value="g/h/i/j/k/l/m/n=1-160"/>
</dbReference>
<dbReference type="PDB" id="7TMT">
    <property type="method" value="EM"/>
    <property type="resolution" value="3.80 A"/>
    <property type="chains" value="g/h/i/j/k/l/m/n=1-160"/>
</dbReference>
<dbReference type="PDB" id="8EAS">
    <property type="method" value="EM"/>
    <property type="resolution" value="2.60 A"/>
    <property type="chains" value="g/h/i/j/k/l/m/n=1-160"/>
</dbReference>
<dbReference type="PDB" id="8EAT">
    <property type="method" value="EM"/>
    <property type="resolution" value="3.10 A"/>
    <property type="chains" value="g/h/i/j/k/l/m/n=1-160"/>
</dbReference>
<dbReference type="PDB" id="8EAU">
    <property type="method" value="EM"/>
    <property type="resolution" value="3.10 A"/>
    <property type="chains" value="g/h/i/j/k/l/m/n=1-160"/>
</dbReference>
<dbReference type="PDB" id="9E76">
    <property type="method" value="EM"/>
    <property type="resolution" value="3.40 A"/>
    <property type="chains" value="E/F/G/H/I/J/K/L=1-160"/>
</dbReference>
<dbReference type="PDB" id="9E7L">
    <property type="method" value="EM"/>
    <property type="resolution" value="3.33 A"/>
    <property type="chains" value="E/F/G/H/I/J/K/L=1-160"/>
</dbReference>
<dbReference type="PDB" id="9MJ4">
    <property type="method" value="EM"/>
    <property type="resolution" value="3.70 A"/>
    <property type="chains" value="E/F/G/H/I/J/K/L=1-160"/>
</dbReference>
<dbReference type="PDBsum" id="3J9T"/>
<dbReference type="PDBsum" id="3J9U"/>
<dbReference type="PDBsum" id="3J9V"/>
<dbReference type="PDBsum" id="5TJ5"/>
<dbReference type="PDBsum" id="5VOX"/>
<dbReference type="PDBsum" id="5VOY"/>
<dbReference type="PDBsum" id="5VOZ"/>
<dbReference type="PDBsum" id="6C6L"/>
<dbReference type="PDBsum" id="6M0R"/>
<dbReference type="PDBsum" id="6M0S"/>
<dbReference type="PDBsum" id="6O7T"/>
<dbReference type="PDBsum" id="6O7U"/>
<dbReference type="PDBsum" id="6O7V"/>
<dbReference type="PDBsum" id="6O7W"/>
<dbReference type="PDBsum" id="6O7X"/>
<dbReference type="PDBsum" id="6PE4"/>
<dbReference type="PDBsum" id="6PE5"/>
<dbReference type="PDBsum" id="7FDA"/>
<dbReference type="PDBsum" id="7FDB"/>
<dbReference type="PDBsum" id="7FDC"/>
<dbReference type="PDBsum" id="7TAO"/>
<dbReference type="PDBsum" id="7TAP"/>
<dbReference type="PDBsum" id="7TMR"/>
<dbReference type="PDBsum" id="7TMS"/>
<dbReference type="PDBsum" id="7TMT"/>
<dbReference type="PDBsum" id="8EAS"/>
<dbReference type="PDBsum" id="8EAT"/>
<dbReference type="PDBsum" id="8EAU"/>
<dbReference type="PDBsum" id="9E76"/>
<dbReference type="PDBsum" id="9E7L"/>
<dbReference type="PDBsum" id="9MJ4"/>
<dbReference type="EMDB" id="EMD-0644"/>
<dbReference type="EMDB" id="EMD-0645"/>
<dbReference type="EMDB" id="EMD-0646"/>
<dbReference type="EMDB" id="EMD-0647"/>
<dbReference type="EMDB" id="EMD-0648"/>
<dbReference type="EMDB" id="EMD-20322"/>
<dbReference type="EMDB" id="EMD-20323"/>
<dbReference type="EMDB" id="EMD-25779"/>
<dbReference type="EMDB" id="EMD-25780"/>
<dbReference type="EMDB" id="EMD-26000"/>
<dbReference type="EMDB" id="EMD-26001"/>
<dbReference type="EMDB" id="EMD-26002"/>
<dbReference type="EMDB" id="EMD-27984"/>
<dbReference type="EMDB" id="EMD-27985"/>
<dbReference type="EMDB" id="EMD-27986"/>
<dbReference type="EMDB" id="EMD-30034"/>
<dbReference type="EMDB" id="EMD-30035"/>
<dbReference type="EMDB" id="EMD-31538"/>
<dbReference type="EMDB" id="EMD-31539"/>
<dbReference type="EMDB" id="EMD-31540"/>
<dbReference type="EMDB" id="EMD-47659"/>
<dbReference type="EMDB" id="EMD-47679"/>
<dbReference type="EMDB" id="EMD-48311"/>
<dbReference type="EMDB" id="EMD-7348"/>
<dbReference type="EMDB" id="EMD-8409"/>
<dbReference type="EMDB" id="EMD-8724"/>
<dbReference type="EMDB" id="EMD-8725"/>
<dbReference type="EMDB" id="EMD-8726"/>
<dbReference type="SMR" id="P25515"/>
<dbReference type="BioGRID" id="36702">
    <property type="interactions" value="398"/>
</dbReference>
<dbReference type="ComplexPortal" id="CPX-1192">
    <property type="entry name" value="Vacuolar proton translocating ATPase complex, Golgi variant"/>
</dbReference>
<dbReference type="ComplexPortal" id="CPX-1193">
    <property type="entry name" value="Vacuolar proton translocating ATPase complex, vacuole variant"/>
</dbReference>
<dbReference type="DIP" id="DIP-8123N"/>
<dbReference type="FunCoup" id="P25515">
    <property type="interactions" value="498"/>
</dbReference>
<dbReference type="IntAct" id="P25515">
    <property type="interactions" value="15"/>
</dbReference>
<dbReference type="MINT" id="P25515"/>
<dbReference type="STRING" id="4932.YEL027W"/>
<dbReference type="TCDB" id="3.A.2.2.3">
    <property type="family name" value="the h+- or na+-translocating f-type, v-type and a-type atpase (f-atpase) superfamily"/>
</dbReference>
<dbReference type="PaxDb" id="4932-YEL027W"/>
<dbReference type="PeptideAtlas" id="P25515"/>
<dbReference type="TopDownProteomics" id="P25515"/>
<dbReference type="EnsemblFungi" id="YEL027W_mRNA">
    <property type="protein sequence ID" value="YEL027W"/>
    <property type="gene ID" value="YEL027W"/>
</dbReference>
<dbReference type="GeneID" id="856686"/>
<dbReference type="KEGG" id="sce:YEL027W"/>
<dbReference type="AGR" id="SGD:S000000753"/>
<dbReference type="SGD" id="S000000753">
    <property type="gene designation" value="VMA3"/>
</dbReference>
<dbReference type="VEuPathDB" id="FungiDB:YEL027W"/>
<dbReference type="eggNOG" id="KOG0232">
    <property type="taxonomic scope" value="Eukaryota"/>
</dbReference>
<dbReference type="GeneTree" id="ENSGT00550000074873"/>
<dbReference type="HOGENOM" id="CLU_085752_1_2_1"/>
<dbReference type="InParanoid" id="P25515"/>
<dbReference type="OMA" id="MGVMKPD"/>
<dbReference type="OrthoDB" id="1744869at2759"/>
<dbReference type="BioCyc" id="YEAST:G3O-30150-MONOMER"/>
<dbReference type="Reactome" id="R-SCE-1222556">
    <property type="pathway name" value="ROS and RNS production in phagocytes"/>
</dbReference>
<dbReference type="Reactome" id="R-SCE-6798695">
    <property type="pathway name" value="Neutrophil degranulation"/>
</dbReference>
<dbReference type="Reactome" id="R-SCE-77387">
    <property type="pathway name" value="Insulin receptor recycling"/>
</dbReference>
<dbReference type="Reactome" id="R-SCE-917977">
    <property type="pathway name" value="Transferrin endocytosis and recycling"/>
</dbReference>
<dbReference type="Reactome" id="R-SCE-9639288">
    <property type="pathway name" value="Amino acids regulate mTORC1"/>
</dbReference>
<dbReference type="BioGRID-ORCS" id="856686">
    <property type="hits" value="7 hits in 10 CRISPR screens"/>
</dbReference>
<dbReference type="EvolutionaryTrace" id="P25515"/>
<dbReference type="PRO" id="PR:P25515"/>
<dbReference type="Proteomes" id="UP000002311">
    <property type="component" value="Chromosome V"/>
</dbReference>
<dbReference type="RNAct" id="P25515">
    <property type="molecule type" value="protein"/>
</dbReference>
<dbReference type="GO" id="GO:0000329">
    <property type="term" value="C:fungal-type vacuole membrane"/>
    <property type="evidence" value="ECO:0000303"/>
    <property type="project" value="ComplexPortal"/>
</dbReference>
<dbReference type="GO" id="GO:0000139">
    <property type="term" value="C:Golgi membrane"/>
    <property type="evidence" value="ECO:0000303"/>
    <property type="project" value="ComplexPortal"/>
</dbReference>
<dbReference type="GO" id="GO:0016020">
    <property type="term" value="C:membrane"/>
    <property type="evidence" value="ECO:0000314"/>
    <property type="project" value="SGD"/>
</dbReference>
<dbReference type="GO" id="GO:0033176">
    <property type="term" value="C:proton-transporting V-type ATPase complex"/>
    <property type="evidence" value="ECO:0000353"/>
    <property type="project" value="ComplexPortal"/>
</dbReference>
<dbReference type="GO" id="GO:0016471">
    <property type="term" value="C:vacuolar proton-transporting V-type ATPase complex"/>
    <property type="evidence" value="ECO:0000353"/>
    <property type="project" value="ComplexPortal"/>
</dbReference>
<dbReference type="GO" id="GO:0000220">
    <property type="term" value="C:vacuolar proton-transporting V-type ATPase, V0 domain"/>
    <property type="evidence" value="ECO:0000314"/>
    <property type="project" value="UniProtKB"/>
</dbReference>
<dbReference type="GO" id="GO:0015078">
    <property type="term" value="F:proton transmembrane transporter activity"/>
    <property type="evidence" value="ECO:0000304"/>
    <property type="project" value="SGD"/>
</dbReference>
<dbReference type="GO" id="GO:0046961">
    <property type="term" value="F:proton-transporting ATPase activity, rotational mechanism"/>
    <property type="evidence" value="ECO:0000305"/>
    <property type="project" value="UniProtKB"/>
</dbReference>
<dbReference type="GO" id="GO:0006897">
    <property type="term" value="P:endocytosis"/>
    <property type="evidence" value="ECO:0000315"/>
    <property type="project" value="SGD"/>
</dbReference>
<dbReference type="GO" id="GO:0048388">
    <property type="term" value="P:endosomal lumen acidification"/>
    <property type="evidence" value="ECO:0000303"/>
    <property type="project" value="ComplexPortal"/>
</dbReference>
<dbReference type="GO" id="GO:0061795">
    <property type="term" value="P:Golgi lumen acidification"/>
    <property type="evidence" value="ECO:0000303"/>
    <property type="project" value="ComplexPortal"/>
</dbReference>
<dbReference type="GO" id="GO:0006878">
    <property type="term" value="P:intracellular copper ion homeostasis"/>
    <property type="evidence" value="ECO:0000315"/>
    <property type="project" value="SGD"/>
</dbReference>
<dbReference type="GO" id="GO:0006879">
    <property type="term" value="P:intracellular iron ion homeostasis"/>
    <property type="evidence" value="ECO:0000315"/>
    <property type="project" value="SGD"/>
</dbReference>
<dbReference type="GO" id="GO:0006623">
    <property type="term" value="P:protein targeting to vacuole"/>
    <property type="evidence" value="ECO:0000315"/>
    <property type="project" value="SGD"/>
</dbReference>
<dbReference type="GO" id="GO:1902600">
    <property type="term" value="P:proton transmembrane transport"/>
    <property type="evidence" value="ECO:0000314"/>
    <property type="project" value="ComplexPortal"/>
</dbReference>
<dbReference type="GO" id="GO:0007035">
    <property type="term" value="P:vacuolar acidification"/>
    <property type="evidence" value="ECO:0000315"/>
    <property type="project" value="SGD"/>
</dbReference>
<dbReference type="GO" id="GO:0007033">
    <property type="term" value="P:vacuole organization"/>
    <property type="evidence" value="ECO:0000315"/>
    <property type="project" value="SGD"/>
</dbReference>
<dbReference type="CDD" id="cd18175">
    <property type="entry name" value="ATP-synt_Vo_c_ATP6C_rpt1"/>
    <property type="match status" value="1"/>
</dbReference>
<dbReference type="CDD" id="cd18176">
    <property type="entry name" value="ATP-synt_Vo_c_ATP6C_rpt2"/>
    <property type="match status" value="1"/>
</dbReference>
<dbReference type="FunFam" id="1.20.120.610:FF:000001">
    <property type="entry name" value="V-type proton ATPase proteolipid subunit"/>
    <property type="match status" value="1"/>
</dbReference>
<dbReference type="Gene3D" id="1.20.120.610">
    <property type="entry name" value="lithium bound rotor ring of v- atpase"/>
    <property type="match status" value="1"/>
</dbReference>
<dbReference type="InterPro" id="IPR002379">
    <property type="entry name" value="ATPase_proteolipid_c-like_dom"/>
</dbReference>
<dbReference type="InterPro" id="IPR000245">
    <property type="entry name" value="ATPase_proteolipid_csu"/>
</dbReference>
<dbReference type="InterPro" id="IPR011555">
    <property type="entry name" value="ATPase_proteolipid_su_C_euk"/>
</dbReference>
<dbReference type="InterPro" id="IPR035921">
    <property type="entry name" value="F/V-ATP_Csub_sf"/>
</dbReference>
<dbReference type="NCBIfam" id="TIGR01100">
    <property type="entry name" value="V_ATP_synt_C"/>
    <property type="match status" value="1"/>
</dbReference>
<dbReference type="PANTHER" id="PTHR10263">
    <property type="entry name" value="V-TYPE PROTON ATPASE PROTEOLIPID SUBUNIT"/>
    <property type="match status" value="1"/>
</dbReference>
<dbReference type="Pfam" id="PF00137">
    <property type="entry name" value="ATP-synt_C"/>
    <property type="match status" value="2"/>
</dbReference>
<dbReference type="PRINTS" id="PR00122">
    <property type="entry name" value="VACATPASE"/>
</dbReference>
<dbReference type="SUPFAM" id="SSF81333">
    <property type="entry name" value="F1F0 ATP synthase subunit C"/>
    <property type="match status" value="2"/>
</dbReference>
<proteinExistence type="evidence at protein level"/>
<feature type="chain" id="PRO_0000071762" description="V-type proton ATPase subunit c">
    <location>
        <begin position="1"/>
        <end position="160"/>
    </location>
</feature>
<feature type="topological domain" description="Vacuolar" evidence="1">
    <location>
        <begin position="1"/>
        <end position="8"/>
    </location>
</feature>
<feature type="transmembrane region" description="Helical" evidence="1">
    <location>
        <begin position="9"/>
        <end position="31"/>
    </location>
</feature>
<feature type="topological domain" description="Cytoplasmic" evidence="1">
    <location>
        <begin position="32"/>
        <end position="53"/>
    </location>
</feature>
<feature type="transmembrane region" description="Helical" evidence="1">
    <location>
        <begin position="54"/>
        <end position="74"/>
    </location>
</feature>
<feature type="topological domain" description="Vacuolar" evidence="1">
    <location>
        <begin position="75"/>
        <end position="90"/>
    </location>
</feature>
<feature type="transmembrane region" description="Helical" evidence="1">
    <location>
        <begin position="91"/>
        <end position="112"/>
    </location>
</feature>
<feature type="topological domain" description="Cytoplasmic" evidence="1">
    <location>
        <begin position="113"/>
        <end position="124"/>
    </location>
</feature>
<feature type="transmembrane region" description="Helical" evidence="1">
    <location>
        <begin position="125"/>
        <end position="150"/>
    </location>
</feature>
<feature type="topological domain" description="Vacuolar" evidence="1">
    <location>
        <begin position="151"/>
        <end position="160"/>
    </location>
</feature>
<feature type="site" description="Essential for proton translocation" evidence="3">
    <location>
        <position position="137"/>
    </location>
</feature>
<feature type="mutagenesis site" description="Partial inactivation." evidence="3">
    <original>E</original>
    <variation>D</variation>
    <location>
        <position position="137"/>
    </location>
</feature>
<feature type="mutagenesis site" description="Inactivation." evidence="3">
    <original>E</original>
    <variation>Q</variation>
    <variation>V</variation>
    <variation>K</variation>
    <location>
        <position position="137"/>
    </location>
</feature>
<feature type="strand" evidence="15">
    <location>
        <begin position="3"/>
        <end position="5"/>
    </location>
</feature>
<feature type="helix" evidence="16">
    <location>
        <begin position="9"/>
        <end position="45"/>
    </location>
</feature>
<feature type="helix" evidence="16">
    <location>
        <begin position="47"/>
        <end position="49"/>
    </location>
</feature>
<feature type="helix" evidence="16">
    <location>
        <begin position="50"/>
        <end position="53"/>
    </location>
</feature>
<feature type="helix" evidence="16">
    <location>
        <begin position="55"/>
        <end position="76"/>
    </location>
</feature>
<feature type="helix" evidence="16">
    <location>
        <begin position="84"/>
        <end position="121"/>
    </location>
</feature>
<feature type="helix" evidence="16">
    <location>
        <begin position="125"/>
        <end position="153"/>
    </location>
</feature>
<feature type="turn" evidence="16">
    <location>
        <begin position="154"/>
        <end position="157"/>
    </location>
</feature>
<sequence length="160" mass="16351">MTELCPVYAPFFGAIGCASAIIFTSLGAAYGTAKSGVGICATCVLRPDLLFKNIVPVIMAGIIAIYGLVVSVLVCYSLGQKQALYTGFIQLGAGLSVGLSGLAAGFAIGIVGDAGVRGSSQQPRLFVGMILILIFAEVLGLYGLIVALLLNSRATQDVVC</sequence>
<reference key="1">
    <citation type="journal article" date="1989" name="FEBS Lett.">
        <title>The progenitor of ATP synthases was closely related to the current vacuolar H+-ATPase.</title>
        <authorList>
            <person name="Nelson H."/>
            <person name="Nelson N."/>
        </authorList>
    </citation>
    <scope>NUCLEOTIDE SEQUENCE [MRNA]</scope>
</reference>
<reference key="2">
    <citation type="journal article" date="1997" name="Nature">
        <title>The nucleotide sequence of Saccharomyces cerevisiae chromosome V.</title>
        <authorList>
            <person name="Dietrich F.S."/>
            <person name="Mulligan J.T."/>
            <person name="Hennessy K.M."/>
            <person name="Yelton M.A."/>
            <person name="Allen E."/>
            <person name="Araujo R."/>
            <person name="Aviles E."/>
            <person name="Berno A."/>
            <person name="Brennan T."/>
            <person name="Carpenter J."/>
            <person name="Chen E."/>
            <person name="Cherry J.M."/>
            <person name="Chung E."/>
            <person name="Duncan M."/>
            <person name="Guzman E."/>
            <person name="Hartzell G."/>
            <person name="Hunicke-Smith S."/>
            <person name="Hyman R.W."/>
            <person name="Kayser A."/>
            <person name="Komp C."/>
            <person name="Lashkari D."/>
            <person name="Lew H."/>
            <person name="Lin D."/>
            <person name="Mosedale D."/>
            <person name="Nakahara K."/>
            <person name="Namath A."/>
            <person name="Norgren R."/>
            <person name="Oefner P."/>
            <person name="Oh C."/>
            <person name="Petel F.X."/>
            <person name="Roberts D."/>
            <person name="Sehl P."/>
            <person name="Schramm S."/>
            <person name="Shogren T."/>
            <person name="Smith V."/>
            <person name="Taylor P."/>
            <person name="Wei Y."/>
            <person name="Botstein D."/>
            <person name="Davis R.W."/>
        </authorList>
    </citation>
    <scope>NUCLEOTIDE SEQUENCE [LARGE SCALE GENOMIC DNA]</scope>
    <source>
        <strain>ATCC 204508 / S288c</strain>
    </source>
</reference>
<reference key="3">
    <citation type="journal article" date="2014" name="G3 (Bethesda)">
        <title>The reference genome sequence of Saccharomyces cerevisiae: Then and now.</title>
        <authorList>
            <person name="Engel S.R."/>
            <person name="Dietrich F.S."/>
            <person name="Fisk D.G."/>
            <person name="Binkley G."/>
            <person name="Balakrishnan R."/>
            <person name="Costanzo M.C."/>
            <person name="Dwight S.S."/>
            <person name="Hitz B.C."/>
            <person name="Karra K."/>
            <person name="Nash R.S."/>
            <person name="Weng S."/>
            <person name="Wong E.D."/>
            <person name="Lloyd P."/>
            <person name="Skrzypek M.S."/>
            <person name="Miyasato S.R."/>
            <person name="Simison M."/>
            <person name="Cherry J.M."/>
        </authorList>
    </citation>
    <scope>GENOME REANNOTATION</scope>
    <source>
        <strain>ATCC 204508 / S288c</strain>
    </source>
</reference>
<reference key="4">
    <citation type="journal article" date="2007" name="Genome Res.">
        <title>Approaching a complete repository of sequence-verified protein-encoding clones for Saccharomyces cerevisiae.</title>
        <authorList>
            <person name="Hu Y."/>
            <person name="Rolfs A."/>
            <person name="Bhullar B."/>
            <person name="Murthy T.V.S."/>
            <person name="Zhu C."/>
            <person name="Berger M.F."/>
            <person name="Camargo A.A."/>
            <person name="Kelley F."/>
            <person name="McCarron S."/>
            <person name="Jepson D."/>
            <person name="Richardson A."/>
            <person name="Raphael J."/>
            <person name="Moreira D."/>
            <person name="Taycher E."/>
            <person name="Zuo D."/>
            <person name="Mohr S."/>
            <person name="Kane M.F."/>
            <person name="Williamson J."/>
            <person name="Simpson A.J.G."/>
            <person name="Bulyk M.L."/>
            <person name="Harlow E."/>
            <person name="Marsischky G."/>
            <person name="Kolodner R.D."/>
            <person name="LaBaer J."/>
        </authorList>
    </citation>
    <scope>NUCLEOTIDE SEQUENCE [GENOMIC DNA]</scope>
    <source>
        <strain>ATCC 204508 / S288c</strain>
    </source>
</reference>
<reference key="5">
    <citation type="journal article" date="1991" name="Proc. Natl. Acad. Sci. U.S.A.">
        <title>Mutational analysis of yeast vacuolar H(+)-ATPase.</title>
        <authorList>
            <person name="Moumi T."/>
            <person name="Beltran C."/>
            <person name="Nelson H."/>
            <person name="Nelson N."/>
        </authorList>
    </citation>
    <scope>FUNCTION</scope>
    <scope>MUTAGENESIS OF GLU-137</scope>
</reference>
<reference key="6">
    <citation type="journal article" date="1997" name="J. Biol. Chem.">
        <title>VMA11 and VMA16 encode second and third proteolipid subunits of the Saccharomyces cerevisiae vacuolar membrane H+-ATPase.</title>
        <authorList>
            <person name="Hirata R."/>
            <person name="Graham L.A."/>
            <person name="Takatsuki A."/>
            <person name="Stevens T.H."/>
            <person name="Anraku Y."/>
        </authorList>
    </citation>
    <scope>SUBCELLULAR LOCATION</scope>
</reference>
<reference key="7">
    <citation type="journal article" date="2003" name="Nature">
        <title>Global analysis of protein expression in yeast.</title>
        <authorList>
            <person name="Ghaemmaghami S."/>
            <person name="Huh W.-K."/>
            <person name="Bower K."/>
            <person name="Howson R.W."/>
            <person name="Belle A."/>
            <person name="Dephoure N."/>
            <person name="O'Shea E.K."/>
            <person name="Weissman J.S."/>
        </authorList>
    </citation>
    <scope>LEVEL OF PROTEIN EXPRESSION [LARGE SCALE ANALYSIS]</scope>
</reference>
<reference key="8">
    <citation type="journal article" date="2006" name="Proc. Natl. Acad. Sci. U.S.A.">
        <title>A global topology map of the Saccharomyces cerevisiae membrane proteome.</title>
        <authorList>
            <person name="Kim H."/>
            <person name="Melen K."/>
            <person name="Oesterberg M."/>
            <person name="von Heijne G."/>
        </authorList>
    </citation>
    <scope>TOPOLOGY [LARGE SCALE ANALYSIS]</scope>
    <source>
        <strain>ATCC 208353 / W303-1A</strain>
    </source>
</reference>
<reference evidence="10 11 12" key="9">
    <citation type="journal article" date="2015" name="Nature">
        <title>Electron cryomicroscopy observation of rotational states in a eukaryotic V-ATPase.</title>
        <authorList>
            <person name="Zhao J."/>
            <person name="Benlekbir S."/>
            <person name="Rubinstein J.L."/>
        </authorList>
    </citation>
    <scope>STRUCTURE BY ELECTRON MICROSCOPY (6.90 ANGSTROMS)</scope>
    <scope>IDENTIFICATION IN THE V-ATPASE COMPLEX</scope>
</reference>
<reference evidence="13" key="10">
    <citation type="journal article" date="2016" name="Nature">
        <title>Atomic model for the membrane-embedded VO motor of a eukaryotic V-ATPase.</title>
        <authorList>
            <person name="Mazhab-Jafari M.T."/>
            <person name="Rohou A."/>
            <person name="Schmidt C."/>
            <person name="Bueler S.A."/>
            <person name="Benlekbir S."/>
            <person name="Robinson C.V."/>
            <person name="Rubinstein J.L."/>
        </authorList>
    </citation>
    <scope>STRUCTURE BY ELECTRON MICROSCOPY (3.90 ANGSTROMS) OF 9-158</scope>
    <scope>IDENTIFICATION IN THE V-ATPASE COMPLEX</scope>
</reference>
<reference evidence="14" key="11">
    <citation type="journal article" date="2018" name="Mol. Cell">
        <title>The 3.5-A cryoEM structure of nanodisc-reconstituted yeast vacuolar ATPase V0 proton channel.</title>
        <authorList>
            <person name="Roh S.H."/>
            <person name="Stam N.J."/>
            <person name="Hryc C.F."/>
            <person name="Couoh-Cardel S."/>
            <person name="Pintilie G."/>
            <person name="Chiu W."/>
            <person name="Wilkens S."/>
        </authorList>
    </citation>
    <scope>STRUCTURE BY ELECTRON MICROSCOPY (3.50 ANGSTROMS)</scope>
    <scope>IDENTIFICATION IN THE V-ATPASE COMPLEX</scope>
</reference>
<accession>P25515</accession>
<accession>D3DLM1</accession>
<comment type="function">
    <text evidence="3">Proton-conducting pore forming subunit of the V0 complex of vacuolar(H+)-ATPase (V-ATPase), a multisubunit enzyme composed of a peripheral complex (V1) that hydrolyzes ATP and a membrane integral complex (V0) that translocates protons (PubMed:1825730). V-ATPase is responsible for acidifying and maintaining the pH of intracellular compartments (PubMed:1825730).</text>
</comment>
<comment type="subunit">
    <text evidence="4 5 6">V-ATPase is a heteromultimeric enzyme composed of a peripheral catalytic V1 complex (components A to H) attached to an integral membrane V0 proton pore complex (components: a, c, c', c'', d, e, f and VOA1) (PubMed:25971514, PubMed:27776355, PubMed:29526695). The decameric c-ring forms the proton-conducting pore, and is composed of eight proteolipid subunits c, one subunit c' and one subunit c'' (PubMed:25971514, PubMed:27776355, PubMed:29526695).</text>
</comment>
<comment type="subcellular location">
    <subcellularLocation>
        <location evidence="7">Vacuole membrane</location>
        <topology evidence="1">Multi-pass membrane protein</topology>
    </subcellularLocation>
</comment>
<comment type="miscellaneous">
    <text evidence="2">Present with 8450 molecules/cell in log phase SD medium.</text>
</comment>
<comment type="similarity">
    <text evidence="9">Belongs to the V-ATPase proteolipid subunit family.</text>
</comment>
<gene>
    <name type="primary">VMA3</name>
    <name type="synonym">CLS7</name>
    <name type="synonym">CUP5</name>
    <name type="synonym">GEF2</name>
    <name type="ordered locus">YEL027W</name>
</gene>
<organism>
    <name type="scientific">Saccharomyces cerevisiae (strain ATCC 204508 / S288c)</name>
    <name type="common">Baker's yeast</name>
    <dbReference type="NCBI Taxonomy" id="559292"/>
    <lineage>
        <taxon>Eukaryota</taxon>
        <taxon>Fungi</taxon>
        <taxon>Dikarya</taxon>
        <taxon>Ascomycota</taxon>
        <taxon>Saccharomycotina</taxon>
        <taxon>Saccharomycetes</taxon>
        <taxon>Saccharomycetales</taxon>
        <taxon>Saccharomycetaceae</taxon>
        <taxon>Saccharomyces</taxon>
    </lineage>
</organism>
<protein>
    <recommendedName>
        <fullName evidence="8">V-type proton ATPase subunit c</fullName>
        <shortName>V-ATPase subunit c</shortName>
    </recommendedName>
    <alternativeName>
        <fullName>Guanine nucleotide exchange factor 2</fullName>
    </alternativeName>
    <alternativeName>
        <fullName>V-ATPase 16 kDa proteolipid subunit 1</fullName>
    </alternativeName>
    <alternativeName>
        <fullName>Vacuolar proton pump c subunit</fullName>
    </alternativeName>
</protein>
<name>VATL1_YEAST</name>
<keyword id="KW-0002">3D-structure</keyword>
<keyword id="KW-0375">Hydrogen ion transport</keyword>
<keyword id="KW-0406">Ion transport</keyword>
<keyword id="KW-0472">Membrane</keyword>
<keyword id="KW-1185">Reference proteome</keyword>
<keyword id="KW-0812">Transmembrane</keyword>
<keyword id="KW-1133">Transmembrane helix</keyword>
<keyword id="KW-0813">Transport</keyword>
<keyword id="KW-0926">Vacuole</keyword>
<evidence type="ECO:0000255" key="1"/>
<evidence type="ECO:0000269" key="2">
    <source>
    </source>
</evidence>
<evidence type="ECO:0000269" key="3">
    <source>
    </source>
</evidence>
<evidence type="ECO:0000269" key="4">
    <source>
    </source>
</evidence>
<evidence type="ECO:0000269" key="5">
    <source>
    </source>
</evidence>
<evidence type="ECO:0000269" key="6">
    <source>
    </source>
</evidence>
<evidence type="ECO:0000269" key="7">
    <source>
    </source>
</evidence>
<evidence type="ECO:0000303" key="8">
    <source>
    </source>
</evidence>
<evidence type="ECO:0000305" key="9"/>
<evidence type="ECO:0007744" key="10">
    <source>
        <dbReference type="PDB" id="3J9T"/>
    </source>
</evidence>
<evidence type="ECO:0007744" key="11">
    <source>
        <dbReference type="PDB" id="3J9U"/>
    </source>
</evidence>
<evidence type="ECO:0007744" key="12">
    <source>
        <dbReference type="PDB" id="3J9V"/>
    </source>
</evidence>
<evidence type="ECO:0007744" key="13">
    <source>
        <dbReference type="PDB" id="5TJ5"/>
    </source>
</evidence>
<evidence type="ECO:0007744" key="14">
    <source>
        <dbReference type="PDB" id="6C6L"/>
    </source>
</evidence>
<evidence type="ECO:0007829" key="15">
    <source>
        <dbReference type="PDB" id="6M0R"/>
    </source>
</evidence>
<evidence type="ECO:0007829" key="16">
    <source>
        <dbReference type="PDB" id="8EAS"/>
    </source>
</evidence>